<proteinExistence type="inferred from homology"/>
<comment type="function">
    <text evidence="1">Involved in peptide bond synthesis. Stimulates efficient translation and peptide-bond synthesis on native or reconstituted 70S ribosomes in vitro. Probably functions indirectly by altering the affinity of the ribosome for aminoacyl-tRNA, thus increasing their reactivity as acceptors for peptidyl transferase.</text>
</comment>
<comment type="pathway">
    <text evidence="1">Protein biosynthesis; polypeptide chain elongation.</text>
</comment>
<comment type="subcellular location">
    <subcellularLocation>
        <location evidence="1">Cytoplasm</location>
    </subcellularLocation>
</comment>
<comment type="similarity">
    <text evidence="1">Belongs to the elongation factor P family.</text>
</comment>
<protein>
    <recommendedName>
        <fullName evidence="1">Elongation factor P</fullName>
        <shortName evidence="1">EF-P</shortName>
    </recommendedName>
</protein>
<dbReference type="EMBL" id="AE016879">
    <property type="protein sequence ID" value="AAP28135.1"/>
    <property type="molecule type" value="Genomic_DNA"/>
</dbReference>
<dbReference type="EMBL" id="AE017334">
    <property type="protein sequence ID" value="AAT33538.1"/>
    <property type="molecule type" value="Genomic_DNA"/>
</dbReference>
<dbReference type="EMBL" id="AE017225">
    <property type="protein sequence ID" value="AAT56402.1"/>
    <property type="molecule type" value="Genomic_DNA"/>
</dbReference>
<dbReference type="RefSeq" id="NP_846649.1">
    <property type="nucleotide sequence ID" value="NC_003997.3"/>
</dbReference>
<dbReference type="RefSeq" id="WP_000626507.1">
    <property type="nucleotide sequence ID" value="NZ_WXXJ01000027.1"/>
</dbReference>
<dbReference type="RefSeq" id="YP_030351.1">
    <property type="nucleotide sequence ID" value="NC_005945.1"/>
</dbReference>
<dbReference type="SMR" id="Q6KMS8"/>
<dbReference type="IntAct" id="Q6KMS8">
    <property type="interactions" value="8"/>
</dbReference>
<dbReference type="STRING" id="261594.GBAA_4421"/>
<dbReference type="DNASU" id="1087775"/>
<dbReference type="GeneID" id="45024081"/>
<dbReference type="KEGG" id="ban:BA_4421"/>
<dbReference type="KEGG" id="bar:GBAA_4421"/>
<dbReference type="KEGG" id="bat:BAS4101"/>
<dbReference type="PATRIC" id="fig|198094.11.peg.4389"/>
<dbReference type="eggNOG" id="COG0231">
    <property type="taxonomic scope" value="Bacteria"/>
</dbReference>
<dbReference type="HOGENOM" id="CLU_074944_0_1_9"/>
<dbReference type="OMA" id="WSVVEFQ"/>
<dbReference type="OrthoDB" id="9801844at2"/>
<dbReference type="UniPathway" id="UPA00345"/>
<dbReference type="Proteomes" id="UP000000427">
    <property type="component" value="Chromosome"/>
</dbReference>
<dbReference type="Proteomes" id="UP000000594">
    <property type="component" value="Chromosome"/>
</dbReference>
<dbReference type="GO" id="GO:0005737">
    <property type="term" value="C:cytoplasm"/>
    <property type="evidence" value="ECO:0007669"/>
    <property type="project" value="UniProtKB-SubCell"/>
</dbReference>
<dbReference type="GO" id="GO:0003746">
    <property type="term" value="F:translation elongation factor activity"/>
    <property type="evidence" value="ECO:0007669"/>
    <property type="project" value="UniProtKB-UniRule"/>
</dbReference>
<dbReference type="GO" id="GO:0043043">
    <property type="term" value="P:peptide biosynthetic process"/>
    <property type="evidence" value="ECO:0007669"/>
    <property type="project" value="InterPro"/>
</dbReference>
<dbReference type="CDD" id="cd04470">
    <property type="entry name" value="S1_EF-P_repeat_1"/>
    <property type="match status" value="1"/>
</dbReference>
<dbReference type="CDD" id="cd05794">
    <property type="entry name" value="S1_EF-P_repeat_2"/>
    <property type="match status" value="1"/>
</dbReference>
<dbReference type="FunFam" id="2.30.30.30:FF:000010">
    <property type="entry name" value="Elongation factor P"/>
    <property type="match status" value="1"/>
</dbReference>
<dbReference type="FunFam" id="2.40.50.140:FF:000004">
    <property type="entry name" value="Elongation factor P"/>
    <property type="match status" value="1"/>
</dbReference>
<dbReference type="FunFam" id="2.40.50.140:FF:000009">
    <property type="entry name" value="Elongation factor P"/>
    <property type="match status" value="1"/>
</dbReference>
<dbReference type="Gene3D" id="2.30.30.30">
    <property type="match status" value="1"/>
</dbReference>
<dbReference type="Gene3D" id="2.40.50.140">
    <property type="entry name" value="Nucleic acid-binding proteins"/>
    <property type="match status" value="2"/>
</dbReference>
<dbReference type="HAMAP" id="MF_00141">
    <property type="entry name" value="EF_P"/>
    <property type="match status" value="1"/>
</dbReference>
<dbReference type="InterPro" id="IPR015365">
    <property type="entry name" value="Elong-fact-P_C"/>
</dbReference>
<dbReference type="InterPro" id="IPR012340">
    <property type="entry name" value="NA-bd_OB-fold"/>
</dbReference>
<dbReference type="InterPro" id="IPR014722">
    <property type="entry name" value="Rib_uL2_dom2"/>
</dbReference>
<dbReference type="InterPro" id="IPR020599">
    <property type="entry name" value="Transl_elong_fac_P/YeiP"/>
</dbReference>
<dbReference type="InterPro" id="IPR013185">
    <property type="entry name" value="Transl_elong_KOW-like"/>
</dbReference>
<dbReference type="InterPro" id="IPR001059">
    <property type="entry name" value="Transl_elong_P/YeiP_cen"/>
</dbReference>
<dbReference type="InterPro" id="IPR013852">
    <property type="entry name" value="Transl_elong_P/YeiP_CS"/>
</dbReference>
<dbReference type="InterPro" id="IPR011768">
    <property type="entry name" value="Transl_elongation_fac_P"/>
</dbReference>
<dbReference type="InterPro" id="IPR008991">
    <property type="entry name" value="Translation_prot_SH3-like_sf"/>
</dbReference>
<dbReference type="NCBIfam" id="TIGR00038">
    <property type="entry name" value="efp"/>
    <property type="match status" value="1"/>
</dbReference>
<dbReference type="NCBIfam" id="NF001810">
    <property type="entry name" value="PRK00529.1"/>
    <property type="match status" value="1"/>
</dbReference>
<dbReference type="PANTHER" id="PTHR30053">
    <property type="entry name" value="ELONGATION FACTOR P"/>
    <property type="match status" value="1"/>
</dbReference>
<dbReference type="PANTHER" id="PTHR30053:SF12">
    <property type="entry name" value="ELONGATION FACTOR P (EF-P) FAMILY PROTEIN"/>
    <property type="match status" value="1"/>
</dbReference>
<dbReference type="Pfam" id="PF01132">
    <property type="entry name" value="EFP"/>
    <property type="match status" value="1"/>
</dbReference>
<dbReference type="Pfam" id="PF08207">
    <property type="entry name" value="EFP_N"/>
    <property type="match status" value="1"/>
</dbReference>
<dbReference type="Pfam" id="PF09285">
    <property type="entry name" value="Elong-fact-P_C"/>
    <property type="match status" value="1"/>
</dbReference>
<dbReference type="PIRSF" id="PIRSF005901">
    <property type="entry name" value="EF-P"/>
    <property type="match status" value="1"/>
</dbReference>
<dbReference type="SMART" id="SM01185">
    <property type="entry name" value="EFP"/>
    <property type="match status" value="1"/>
</dbReference>
<dbReference type="SMART" id="SM00841">
    <property type="entry name" value="Elong-fact-P_C"/>
    <property type="match status" value="1"/>
</dbReference>
<dbReference type="SUPFAM" id="SSF50249">
    <property type="entry name" value="Nucleic acid-binding proteins"/>
    <property type="match status" value="2"/>
</dbReference>
<dbReference type="SUPFAM" id="SSF50104">
    <property type="entry name" value="Translation proteins SH3-like domain"/>
    <property type="match status" value="1"/>
</dbReference>
<dbReference type="PROSITE" id="PS01275">
    <property type="entry name" value="EFP"/>
    <property type="match status" value="1"/>
</dbReference>
<sequence length="185" mass="20692">MISVNDFRTGLTIAVDNGLWQVLDFQHVKPGKGAAFVRSKLRNLRTGSVQEKTFRAGEKVEKAHIENRRMQYLYASGEAHVFMDNGTYEQIELGEKQIERELKFLKENMEVSIMTYQGEVLGVELPNTVELQVTETEPGIKGDTASNVTKPATLETGLVVQVPIFINEGEMLIINTGEGKYVSRA</sequence>
<evidence type="ECO:0000255" key="1">
    <source>
        <dbReference type="HAMAP-Rule" id="MF_00141"/>
    </source>
</evidence>
<gene>
    <name evidence="1" type="primary">efp</name>
    <name type="ordered locus">BA_4421</name>
    <name type="ordered locus">GBAA_4421</name>
    <name type="ordered locus">BAS4101</name>
</gene>
<accession>Q6KMS8</accession>
<accession>Q6HTI7</accession>
<accession>Q81M34</accession>
<name>EFP_BACAN</name>
<feature type="chain" id="PRO_0000094191" description="Elongation factor P">
    <location>
        <begin position="1"/>
        <end position="185"/>
    </location>
</feature>
<organism>
    <name type="scientific">Bacillus anthracis</name>
    <dbReference type="NCBI Taxonomy" id="1392"/>
    <lineage>
        <taxon>Bacteria</taxon>
        <taxon>Bacillati</taxon>
        <taxon>Bacillota</taxon>
        <taxon>Bacilli</taxon>
        <taxon>Bacillales</taxon>
        <taxon>Bacillaceae</taxon>
        <taxon>Bacillus</taxon>
        <taxon>Bacillus cereus group</taxon>
    </lineage>
</organism>
<keyword id="KW-0963">Cytoplasm</keyword>
<keyword id="KW-0251">Elongation factor</keyword>
<keyword id="KW-0648">Protein biosynthesis</keyword>
<keyword id="KW-1185">Reference proteome</keyword>
<reference key="1">
    <citation type="journal article" date="2003" name="Nature">
        <title>The genome sequence of Bacillus anthracis Ames and comparison to closely related bacteria.</title>
        <authorList>
            <person name="Read T.D."/>
            <person name="Peterson S.N."/>
            <person name="Tourasse N.J."/>
            <person name="Baillie L.W."/>
            <person name="Paulsen I.T."/>
            <person name="Nelson K.E."/>
            <person name="Tettelin H."/>
            <person name="Fouts D.E."/>
            <person name="Eisen J.A."/>
            <person name="Gill S.R."/>
            <person name="Holtzapple E.K."/>
            <person name="Okstad O.A."/>
            <person name="Helgason E."/>
            <person name="Rilstone J."/>
            <person name="Wu M."/>
            <person name="Kolonay J.F."/>
            <person name="Beanan M.J."/>
            <person name="Dodson R.J."/>
            <person name="Brinkac L.M."/>
            <person name="Gwinn M.L."/>
            <person name="DeBoy R.T."/>
            <person name="Madpu R."/>
            <person name="Daugherty S.C."/>
            <person name="Durkin A.S."/>
            <person name="Haft D.H."/>
            <person name="Nelson W.C."/>
            <person name="Peterson J.D."/>
            <person name="Pop M."/>
            <person name="Khouri H.M."/>
            <person name="Radune D."/>
            <person name="Benton J.L."/>
            <person name="Mahamoud Y."/>
            <person name="Jiang L."/>
            <person name="Hance I.R."/>
            <person name="Weidman J.F."/>
            <person name="Berry K.J."/>
            <person name="Plaut R.D."/>
            <person name="Wolf A.M."/>
            <person name="Watkins K.L."/>
            <person name="Nierman W.C."/>
            <person name="Hazen A."/>
            <person name="Cline R.T."/>
            <person name="Redmond C."/>
            <person name="Thwaite J.E."/>
            <person name="White O."/>
            <person name="Salzberg S.L."/>
            <person name="Thomason B."/>
            <person name="Friedlander A.M."/>
            <person name="Koehler T.M."/>
            <person name="Hanna P.C."/>
            <person name="Kolstoe A.-B."/>
            <person name="Fraser C.M."/>
        </authorList>
    </citation>
    <scope>NUCLEOTIDE SEQUENCE [LARGE SCALE GENOMIC DNA]</scope>
    <source>
        <strain>Ames / isolate Porton</strain>
    </source>
</reference>
<reference key="2">
    <citation type="journal article" date="2009" name="J. Bacteriol.">
        <title>The complete genome sequence of Bacillus anthracis Ames 'Ancestor'.</title>
        <authorList>
            <person name="Ravel J."/>
            <person name="Jiang L."/>
            <person name="Stanley S.T."/>
            <person name="Wilson M.R."/>
            <person name="Decker R.S."/>
            <person name="Read T.D."/>
            <person name="Worsham P."/>
            <person name="Keim P.S."/>
            <person name="Salzberg S.L."/>
            <person name="Fraser-Liggett C.M."/>
            <person name="Rasko D.A."/>
        </authorList>
    </citation>
    <scope>NUCLEOTIDE SEQUENCE [LARGE SCALE GENOMIC DNA]</scope>
    <source>
        <strain>Ames ancestor</strain>
    </source>
</reference>
<reference key="3">
    <citation type="submission" date="2004-01" db="EMBL/GenBank/DDBJ databases">
        <title>Complete genome sequence of Bacillus anthracis Sterne.</title>
        <authorList>
            <person name="Brettin T.S."/>
            <person name="Bruce D."/>
            <person name="Challacombe J.F."/>
            <person name="Gilna P."/>
            <person name="Han C."/>
            <person name="Hill K."/>
            <person name="Hitchcock P."/>
            <person name="Jackson P."/>
            <person name="Keim P."/>
            <person name="Longmire J."/>
            <person name="Lucas S."/>
            <person name="Okinaka R."/>
            <person name="Richardson P."/>
            <person name="Rubin E."/>
            <person name="Tice H."/>
        </authorList>
    </citation>
    <scope>NUCLEOTIDE SEQUENCE [LARGE SCALE GENOMIC DNA]</scope>
    <source>
        <strain>Sterne</strain>
    </source>
</reference>